<comment type="function">
    <text evidence="1">Facilitates the functional incorporation of the urease nickel metallocenter. This process requires GTP hydrolysis, probably effectuated by UreG.</text>
</comment>
<comment type="subunit">
    <text evidence="1">Homodimer. UreD, UreF and UreG form a complex that acts as a GTP-hydrolysis-dependent molecular chaperone, activating the urease apoprotein by helping to assemble the nickel containing metallocenter of UreC. The UreE protein probably delivers the nickel.</text>
</comment>
<comment type="subcellular location">
    <subcellularLocation>
        <location evidence="1">Cytoplasm</location>
    </subcellularLocation>
</comment>
<comment type="similarity">
    <text evidence="1">Belongs to the SIMIBI class G3E GTPase family. UreG subfamily.</text>
</comment>
<proteinExistence type="inferred from homology"/>
<accession>Q5M1G3</accession>
<feature type="chain" id="PRO_1000145239" description="Urease accessory protein UreG">
    <location>
        <begin position="1"/>
        <end position="204"/>
    </location>
</feature>
<feature type="binding site" evidence="1">
    <location>
        <begin position="12"/>
        <end position="19"/>
    </location>
    <ligand>
        <name>GTP</name>
        <dbReference type="ChEBI" id="CHEBI:37565"/>
    </ligand>
</feature>
<name>UREG_STRT1</name>
<gene>
    <name evidence="1" type="primary">ureG</name>
    <name type="ordered locus">str0286</name>
</gene>
<sequence>MTKRTVIIGVGGPVGSGKTLLLERLTRRMSDLNLAVITNDIYTKEDALFLAKNSSLDEDRIIGVETGGCPHTAIREDASMNFEAIETLQERFNHDLDVIFLESGGDNLAATFSPDLVDFTIYIIDVAQGEKIPRKAGQGMIKSDLFLINKTDLAPYVGANLDRMREDTLHFRNEDSFIFTNLNNDDNVKEVEEWIRKNFLLEDL</sequence>
<evidence type="ECO:0000255" key="1">
    <source>
        <dbReference type="HAMAP-Rule" id="MF_01389"/>
    </source>
</evidence>
<keyword id="KW-0143">Chaperone</keyword>
<keyword id="KW-0963">Cytoplasm</keyword>
<keyword id="KW-0342">GTP-binding</keyword>
<keyword id="KW-0996">Nickel insertion</keyword>
<keyword id="KW-0547">Nucleotide-binding</keyword>
<dbReference type="EMBL" id="CP000024">
    <property type="protein sequence ID" value="AAV61898.1"/>
    <property type="molecule type" value="Genomic_DNA"/>
</dbReference>
<dbReference type="RefSeq" id="WP_002889928.1">
    <property type="nucleotide sequence ID" value="NC_006449.1"/>
</dbReference>
<dbReference type="SMR" id="Q5M1G3"/>
<dbReference type="GeneID" id="93791475"/>
<dbReference type="KEGG" id="stc:str0286"/>
<dbReference type="HOGENOM" id="CLU_072144_1_0_9"/>
<dbReference type="GO" id="GO:0005737">
    <property type="term" value="C:cytoplasm"/>
    <property type="evidence" value="ECO:0007669"/>
    <property type="project" value="UniProtKB-SubCell"/>
</dbReference>
<dbReference type="GO" id="GO:0005525">
    <property type="term" value="F:GTP binding"/>
    <property type="evidence" value="ECO:0007669"/>
    <property type="project" value="UniProtKB-KW"/>
</dbReference>
<dbReference type="GO" id="GO:0003924">
    <property type="term" value="F:GTPase activity"/>
    <property type="evidence" value="ECO:0007669"/>
    <property type="project" value="InterPro"/>
</dbReference>
<dbReference type="GO" id="GO:0016151">
    <property type="term" value="F:nickel cation binding"/>
    <property type="evidence" value="ECO:0007669"/>
    <property type="project" value="UniProtKB-UniRule"/>
</dbReference>
<dbReference type="GO" id="GO:0043419">
    <property type="term" value="P:urea catabolic process"/>
    <property type="evidence" value="ECO:0007669"/>
    <property type="project" value="InterPro"/>
</dbReference>
<dbReference type="CDD" id="cd05540">
    <property type="entry name" value="UreG"/>
    <property type="match status" value="1"/>
</dbReference>
<dbReference type="Gene3D" id="3.40.50.300">
    <property type="entry name" value="P-loop containing nucleotide triphosphate hydrolases"/>
    <property type="match status" value="1"/>
</dbReference>
<dbReference type="HAMAP" id="MF_01389">
    <property type="entry name" value="UreG"/>
    <property type="match status" value="1"/>
</dbReference>
<dbReference type="InterPro" id="IPR003495">
    <property type="entry name" value="CobW/HypB/UreG_nucleotide-bd"/>
</dbReference>
<dbReference type="InterPro" id="IPR027417">
    <property type="entry name" value="P-loop_NTPase"/>
</dbReference>
<dbReference type="InterPro" id="IPR004400">
    <property type="entry name" value="UreG"/>
</dbReference>
<dbReference type="NCBIfam" id="TIGR00101">
    <property type="entry name" value="ureG"/>
    <property type="match status" value="1"/>
</dbReference>
<dbReference type="PANTHER" id="PTHR31715">
    <property type="entry name" value="UREASE ACCESSORY PROTEIN G"/>
    <property type="match status" value="1"/>
</dbReference>
<dbReference type="PANTHER" id="PTHR31715:SF0">
    <property type="entry name" value="UREASE ACCESSORY PROTEIN G"/>
    <property type="match status" value="1"/>
</dbReference>
<dbReference type="Pfam" id="PF02492">
    <property type="entry name" value="cobW"/>
    <property type="match status" value="1"/>
</dbReference>
<dbReference type="PIRSF" id="PIRSF005624">
    <property type="entry name" value="Ni-bind_GTPase"/>
    <property type="match status" value="1"/>
</dbReference>
<dbReference type="SUPFAM" id="SSF52540">
    <property type="entry name" value="P-loop containing nucleoside triphosphate hydrolases"/>
    <property type="match status" value="1"/>
</dbReference>
<organism>
    <name type="scientific">Streptococcus thermophilus (strain CNRZ 1066)</name>
    <dbReference type="NCBI Taxonomy" id="299768"/>
    <lineage>
        <taxon>Bacteria</taxon>
        <taxon>Bacillati</taxon>
        <taxon>Bacillota</taxon>
        <taxon>Bacilli</taxon>
        <taxon>Lactobacillales</taxon>
        <taxon>Streptococcaceae</taxon>
        <taxon>Streptococcus</taxon>
    </lineage>
</organism>
<protein>
    <recommendedName>
        <fullName evidence="1">Urease accessory protein UreG</fullName>
    </recommendedName>
</protein>
<reference key="1">
    <citation type="journal article" date="2004" name="Nat. Biotechnol.">
        <title>Complete sequence and comparative genome analysis of the dairy bacterium Streptococcus thermophilus.</title>
        <authorList>
            <person name="Bolotin A."/>
            <person name="Quinquis B."/>
            <person name="Renault P."/>
            <person name="Sorokin A."/>
            <person name="Ehrlich S.D."/>
            <person name="Kulakauskas S."/>
            <person name="Lapidus A."/>
            <person name="Goltsman E."/>
            <person name="Mazur M."/>
            <person name="Pusch G.D."/>
            <person name="Fonstein M."/>
            <person name="Overbeek R."/>
            <person name="Kyprides N."/>
            <person name="Purnelle B."/>
            <person name="Prozzi D."/>
            <person name="Ngui K."/>
            <person name="Masuy D."/>
            <person name="Hancy F."/>
            <person name="Burteau S."/>
            <person name="Boutry M."/>
            <person name="Delcour J."/>
            <person name="Goffeau A."/>
            <person name="Hols P."/>
        </authorList>
    </citation>
    <scope>NUCLEOTIDE SEQUENCE [LARGE SCALE GENOMIC DNA]</scope>
    <source>
        <strain>CNRZ 1066</strain>
    </source>
</reference>